<sequence length="236" mass="25289">MSYNLTDPYEIARYIKEAKKSTPIKAYIEGDLSNCDFTNIEKFNSGDLYILFGESEEILVIIEKNKDKIKNCRIEQDRRKSAIPLLDMLKINARIEPGATIRDKVIIGENAVIMMGAVVNIGAEIGEGTMVDMNAVVGARGKLGKNVHLGAGAVVAGVLEPPSSDPCTIEDNVLIGANAVILEGVKIGKGSVVAAGSIVTTDVPENVVVAGAPAKIIKEVDVKTKDKTKLLDDLRK</sequence>
<name>DAPH_CLOB1</name>
<comment type="function">
    <text evidence="1">Catalyzes the transfer of an acetyl group from acetyl-CoA to tetrahydrodipicolinate.</text>
</comment>
<comment type="catalytic activity">
    <reaction evidence="1">
        <text>(S)-2,3,4,5-tetrahydrodipicolinate + acetyl-CoA + H2O = L-2-acetamido-6-oxoheptanedioate + CoA</text>
        <dbReference type="Rhea" id="RHEA:13085"/>
        <dbReference type="ChEBI" id="CHEBI:15377"/>
        <dbReference type="ChEBI" id="CHEBI:16845"/>
        <dbReference type="ChEBI" id="CHEBI:57287"/>
        <dbReference type="ChEBI" id="CHEBI:57288"/>
        <dbReference type="ChEBI" id="CHEBI:58117"/>
        <dbReference type="EC" id="2.3.1.89"/>
    </reaction>
</comment>
<comment type="pathway">
    <text evidence="1">Amino-acid biosynthesis; L-lysine biosynthesis via DAP pathway; LL-2,6-diaminopimelate from (S)-tetrahydrodipicolinate (acetylase route): step 1/3.</text>
</comment>
<comment type="similarity">
    <text evidence="1">Belongs to the transferase hexapeptide repeat family. DapH subfamily.</text>
</comment>
<reference key="1">
    <citation type="journal article" date="2007" name="PLoS ONE">
        <title>Analysis of the neurotoxin complex genes in Clostridium botulinum A1-A4 and B1 strains: BoNT/A3, /Ba4 and /B1 clusters are located within plasmids.</title>
        <authorList>
            <person name="Smith T.J."/>
            <person name="Hill K.K."/>
            <person name="Foley B.T."/>
            <person name="Detter J.C."/>
            <person name="Munk A.C."/>
            <person name="Bruce D.C."/>
            <person name="Doggett N.A."/>
            <person name="Smith L.A."/>
            <person name="Marks J.D."/>
            <person name="Xie G."/>
            <person name="Brettin T.S."/>
        </authorList>
    </citation>
    <scope>NUCLEOTIDE SEQUENCE [LARGE SCALE GENOMIC DNA]</scope>
    <source>
        <strain>ATCC 19397 / Type A</strain>
    </source>
</reference>
<dbReference type="EC" id="2.3.1.89" evidence="1"/>
<dbReference type="EMBL" id="CP000726">
    <property type="protein sequence ID" value="ABS32695.1"/>
    <property type="molecule type" value="Genomic_DNA"/>
</dbReference>
<dbReference type="SMR" id="A7FYA5"/>
<dbReference type="KEGG" id="cba:CLB_3191"/>
<dbReference type="HOGENOM" id="CLU_103751_0_0_9"/>
<dbReference type="UniPathway" id="UPA00034">
    <property type="reaction ID" value="UER00022"/>
</dbReference>
<dbReference type="GO" id="GO:0047200">
    <property type="term" value="F:tetrahydrodipicolinate N-acetyltransferase activity"/>
    <property type="evidence" value="ECO:0007669"/>
    <property type="project" value="UniProtKB-EC"/>
</dbReference>
<dbReference type="GO" id="GO:0019877">
    <property type="term" value="P:diaminopimelate biosynthetic process"/>
    <property type="evidence" value="ECO:0007669"/>
    <property type="project" value="UniProtKB-UniRule"/>
</dbReference>
<dbReference type="GO" id="GO:0009089">
    <property type="term" value="P:lysine biosynthetic process via diaminopimelate"/>
    <property type="evidence" value="ECO:0007669"/>
    <property type="project" value="UniProtKB-UniRule"/>
</dbReference>
<dbReference type="CDD" id="cd03350">
    <property type="entry name" value="LbH_THP_succinylT"/>
    <property type="match status" value="1"/>
</dbReference>
<dbReference type="Gene3D" id="2.160.10.10">
    <property type="entry name" value="Hexapeptide repeat proteins"/>
    <property type="match status" value="1"/>
</dbReference>
<dbReference type="Gene3D" id="3.30.70.250">
    <property type="entry name" value="Malonyl-CoA ACP transacylase, ACP-binding"/>
    <property type="match status" value="1"/>
</dbReference>
<dbReference type="HAMAP" id="MF_01691">
    <property type="entry name" value="DapH"/>
    <property type="match status" value="1"/>
</dbReference>
<dbReference type="InterPro" id="IPR019873">
    <property type="entry name" value="DapH"/>
</dbReference>
<dbReference type="InterPro" id="IPR013710">
    <property type="entry name" value="DapH_N"/>
</dbReference>
<dbReference type="InterPro" id="IPR001451">
    <property type="entry name" value="Hexapep"/>
</dbReference>
<dbReference type="InterPro" id="IPR018357">
    <property type="entry name" value="Hexapep_transf_CS"/>
</dbReference>
<dbReference type="InterPro" id="IPR050179">
    <property type="entry name" value="Trans_hexapeptide_repeat"/>
</dbReference>
<dbReference type="InterPro" id="IPR011004">
    <property type="entry name" value="Trimer_LpxA-like_sf"/>
</dbReference>
<dbReference type="NCBIfam" id="TIGR03532">
    <property type="entry name" value="DapD_Ac"/>
    <property type="match status" value="1"/>
</dbReference>
<dbReference type="PANTHER" id="PTHR43300:SF10">
    <property type="entry name" value="2,3,4,5-TETRAHYDROPYRIDINE-2,6-DICARBOXYLATE N-ACETYLTRANSFERASE"/>
    <property type="match status" value="1"/>
</dbReference>
<dbReference type="PANTHER" id="PTHR43300">
    <property type="entry name" value="ACETYLTRANSFERASE"/>
    <property type="match status" value="1"/>
</dbReference>
<dbReference type="Pfam" id="PF08503">
    <property type="entry name" value="DapH_N"/>
    <property type="match status" value="1"/>
</dbReference>
<dbReference type="Pfam" id="PF14602">
    <property type="entry name" value="Hexapep_2"/>
    <property type="match status" value="2"/>
</dbReference>
<dbReference type="SUPFAM" id="SSF51161">
    <property type="entry name" value="Trimeric LpxA-like enzymes"/>
    <property type="match status" value="1"/>
</dbReference>
<dbReference type="PROSITE" id="PS00101">
    <property type="entry name" value="HEXAPEP_TRANSFERASES"/>
    <property type="match status" value="1"/>
</dbReference>
<keyword id="KW-0012">Acyltransferase</keyword>
<keyword id="KW-0028">Amino-acid biosynthesis</keyword>
<keyword id="KW-0220">Diaminopimelate biosynthesis</keyword>
<keyword id="KW-0457">Lysine biosynthesis</keyword>
<keyword id="KW-0677">Repeat</keyword>
<keyword id="KW-0808">Transferase</keyword>
<organism>
    <name type="scientific">Clostridium botulinum (strain ATCC 19397 / Type A)</name>
    <dbReference type="NCBI Taxonomy" id="441770"/>
    <lineage>
        <taxon>Bacteria</taxon>
        <taxon>Bacillati</taxon>
        <taxon>Bacillota</taxon>
        <taxon>Clostridia</taxon>
        <taxon>Eubacteriales</taxon>
        <taxon>Clostridiaceae</taxon>
        <taxon>Clostridium</taxon>
    </lineage>
</organism>
<accession>A7FYA5</accession>
<proteinExistence type="inferred from homology"/>
<protein>
    <recommendedName>
        <fullName evidence="1">2,3,4,5-tetrahydropyridine-2,6-dicarboxylate N-acetyltransferase</fullName>
        <ecNumber evidence="1">2.3.1.89</ecNumber>
    </recommendedName>
    <alternativeName>
        <fullName evidence="1">Tetrahydrodipicolinate N-acetyltransferase</fullName>
        <shortName evidence="1">THP acetyltransferase</shortName>
        <shortName evidence="1">Tetrahydropicolinate acetylase</shortName>
    </alternativeName>
</protein>
<feature type="chain" id="PRO_0000376645" description="2,3,4,5-tetrahydropyridine-2,6-dicarboxylate N-acetyltransferase">
    <location>
        <begin position="1"/>
        <end position="236"/>
    </location>
</feature>
<gene>
    <name evidence="1" type="primary">dapH</name>
    <name type="ordered locus">CLB_3191</name>
</gene>
<evidence type="ECO:0000255" key="1">
    <source>
        <dbReference type="HAMAP-Rule" id="MF_01691"/>
    </source>
</evidence>